<sequence length="176" mass="21009">MGFPKEGEKVQIHSYKHNGSIHRMWEETTILKGTQSLVIGANDRTVVTESDGRTWITREPAICYFHANYWFNVIGMLREEGVYYYCNLSSPFAYDSEALKYIDYDLDIKVYPDMTYTLLDEDEYEKHSQIMQYPPVIDTILKRNVAQLTQWIHQRKGPFAPDFVDMWYERYLMYRN</sequence>
<reference key="1">
    <citation type="submission" date="2008-10" db="EMBL/GenBank/DDBJ databases">
        <title>Genome sequence of Bacillus cereus AH820.</title>
        <authorList>
            <person name="Dodson R.J."/>
            <person name="Durkin A.S."/>
            <person name="Rosovitz M.J."/>
            <person name="Rasko D.A."/>
            <person name="Hoffmaster A."/>
            <person name="Ravel J."/>
            <person name="Sutton G."/>
        </authorList>
    </citation>
    <scope>NUCLEOTIDE SEQUENCE [LARGE SCALE GENOMIC DNA]</scope>
    <source>
        <strain>AH820</strain>
    </source>
</reference>
<dbReference type="EC" id="3.6.1.15" evidence="1"/>
<dbReference type="EC" id="3.6.1.6" evidence="1"/>
<dbReference type="EMBL" id="CP001283">
    <property type="protein sequence ID" value="ACK88612.1"/>
    <property type="molecule type" value="Genomic_DNA"/>
</dbReference>
<dbReference type="RefSeq" id="WP_000506628.1">
    <property type="nucleotide sequence ID" value="NC_011773.1"/>
</dbReference>
<dbReference type="SMR" id="B7JNG2"/>
<dbReference type="KEGG" id="bcu:BCAH820_0510"/>
<dbReference type="HOGENOM" id="CLU_109787_1_0_9"/>
<dbReference type="Proteomes" id="UP000001363">
    <property type="component" value="Chromosome"/>
</dbReference>
<dbReference type="GO" id="GO:0000287">
    <property type="term" value="F:magnesium ion binding"/>
    <property type="evidence" value="ECO:0007669"/>
    <property type="project" value="UniProtKB-UniRule"/>
</dbReference>
<dbReference type="GO" id="GO:0017110">
    <property type="term" value="F:nucleoside diphosphate phosphatase activity"/>
    <property type="evidence" value="ECO:0007669"/>
    <property type="project" value="UniProtKB-UniRule"/>
</dbReference>
<dbReference type="GO" id="GO:0017111">
    <property type="term" value="F:ribonucleoside triphosphate phosphatase activity"/>
    <property type="evidence" value="ECO:0007669"/>
    <property type="project" value="UniProtKB-UniRule"/>
</dbReference>
<dbReference type="Gene3D" id="2.40.380.10">
    <property type="entry name" value="FomD-like"/>
    <property type="match status" value="1"/>
</dbReference>
<dbReference type="HAMAP" id="MF_01568">
    <property type="entry name" value="Ntdp"/>
    <property type="match status" value="1"/>
</dbReference>
<dbReference type="InterPro" id="IPR007295">
    <property type="entry name" value="DUF402"/>
</dbReference>
<dbReference type="InterPro" id="IPR035930">
    <property type="entry name" value="FomD-like_sf"/>
</dbReference>
<dbReference type="InterPro" id="IPR050212">
    <property type="entry name" value="Ntdp-like"/>
</dbReference>
<dbReference type="InterPro" id="IPR016882">
    <property type="entry name" value="SA1684"/>
</dbReference>
<dbReference type="NCBIfam" id="NF010183">
    <property type="entry name" value="PRK13662.1"/>
    <property type="match status" value="1"/>
</dbReference>
<dbReference type="PANTHER" id="PTHR39159">
    <property type="match status" value="1"/>
</dbReference>
<dbReference type="PANTHER" id="PTHR39159:SF1">
    <property type="entry name" value="UPF0374 PROTEIN YGAC"/>
    <property type="match status" value="1"/>
</dbReference>
<dbReference type="Pfam" id="PF04167">
    <property type="entry name" value="DUF402"/>
    <property type="match status" value="1"/>
</dbReference>
<dbReference type="PIRSF" id="PIRSF028345">
    <property type="entry name" value="UCP028345"/>
    <property type="match status" value="1"/>
</dbReference>
<dbReference type="SUPFAM" id="SSF159234">
    <property type="entry name" value="FomD-like"/>
    <property type="match status" value="1"/>
</dbReference>
<gene>
    <name type="ordered locus">BCAH820_0510</name>
</gene>
<comment type="function">
    <text evidence="1">Has nucleoside phosphatase activity towards nucleoside triphosphates and nucleoside diphosphates.</text>
</comment>
<comment type="catalytic activity">
    <reaction evidence="1">
        <text>a ribonucleoside 5'-triphosphate + H2O = a ribonucleoside 5'-diphosphate + phosphate + H(+)</text>
        <dbReference type="Rhea" id="RHEA:23680"/>
        <dbReference type="ChEBI" id="CHEBI:15377"/>
        <dbReference type="ChEBI" id="CHEBI:15378"/>
        <dbReference type="ChEBI" id="CHEBI:43474"/>
        <dbReference type="ChEBI" id="CHEBI:57930"/>
        <dbReference type="ChEBI" id="CHEBI:61557"/>
        <dbReference type="EC" id="3.6.1.15"/>
    </reaction>
</comment>
<comment type="catalytic activity">
    <reaction evidence="1">
        <text>a ribonucleoside 5'-diphosphate + H2O = a ribonucleoside 5'-phosphate + phosphate + H(+)</text>
        <dbReference type="Rhea" id="RHEA:36799"/>
        <dbReference type="ChEBI" id="CHEBI:15377"/>
        <dbReference type="ChEBI" id="CHEBI:15378"/>
        <dbReference type="ChEBI" id="CHEBI:43474"/>
        <dbReference type="ChEBI" id="CHEBI:57930"/>
        <dbReference type="ChEBI" id="CHEBI:58043"/>
        <dbReference type="EC" id="3.6.1.6"/>
    </reaction>
</comment>
<comment type="cofactor">
    <cofactor evidence="1">
        <name>Mg(2+)</name>
        <dbReference type="ChEBI" id="CHEBI:18420"/>
    </cofactor>
</comment>
<comment type="similarity">
    <text evidence="1">Belongs to the Ntdp family.</text>
</comment>
<accession>B7JNG2</accession>
<proteinExistence type="inferred from homology"/>
<protein>
    <recommendedName>
        <fullName evidence="1">Nucleoside triphosphate/diphosphate phosphatase</fullName>
        <ecNumber evidence="1">3.6.1.15</ecNumber>
        <ecNumber evidence="1">3.6.1.6</ecNumber>
    </recommendedName>
</protein>
<organism>
    <name type="scientific">Bacillus cereus (strain AH820)</name>
    <dbReference type="NCBI Taxonomy" id="405535"/>
    <lineage>
        <taxon>Bacteria</taxon>
        <taxon>Bacillati</taxon>
        <taxon>Bacillota</taxon>
        <taxon>Bacilli</taxon>
        <taxon>Bacillales</taxon>
        <taxon>Bacillaceae</taxon>
        <taxon>Bacillus</taxon>
        <taxon>Bacillus cereus group</taxon>
    </lineage>
</organism>
<feature type="chain" id="PRO_1000199749" description="Nucleoside triphosphate/diphosphate phosphatase">
    <location>
        <begin position="1"/>
        <end position="176"/>
    </location>
</feature>
<feature type="active site" description="Proton donor" evidence="1">
    <location>
        <position position="23"/>
    </location>
</feature>
<feature type="binding site" evidence="1">
    <location>
        <position position="87"/>
    </location>
    <ligand>
        <name>Mg(2+)</name>
        <dbReference type="ChEBI" id="CHEBI:18420"/>
        <label>1</label>
    </ligand>
</feature>
<feature type="binding site" evidence="1">
    <location>
        <position position="103"/>
    </location>
    <ligand>
        <name>Mg(2+)</name>
        <dbReference type="ChEBI" id="CHEBI:18420"/>
        <label>1</label>
    </ligand>
</feature>
<feature type="binding site" evidence="1">
    <location>
        <position position="105"/>
    </location>
    <ligand>
        <name>Mg(2+)</name>
        <dbReference type="ChEBI" id="CHEBI:18420"/>
        <label>2</label>
    </ligand>
</feature>
<feature type="binding site" evidence="1">
    <location>
        <position position="107"/>
    </location>
    <ligand>
        <name>Mg(2+)</name>
        <dbReference type="ChEBI" id="CHEBI:18420"/>
        <label>1</label>
    </ligand>
</feature>
<feature type="binding site" evidence="1">
    <location>
        <position position="107"/>
    </location>
    <ligand>
        <name>Mg(2+)</name>
        <dbReference type="ChEBI" id="CHEBI:18420"/>
        <label>2</label>
    </ligand>
</feature>
<feature type="binding site" evidence="1">
    <location>
        <position position="120"/>
    </location>
    <ligand>
        <name>Mg(2+)</name>
        <dbReference type="ChEBI" id="CHEBI:18420"/>
        <label>2</label>
    </ligand>
</feature>
<feature type="binding site" evidence="1">
    <location>
        <position position="123"/>
    </location>
    <ligand>
        <name>Mg(2+)</name>
        <dbReference type="ChEBI" id="CHEBI:18420"/>
        <label>2</label>
    </ligand>
</feature>
<name>NTDP_BACC0</name>
<evidence type="ECO:0000255" key="1">
    <source>
        <dbReference type="HAMAP-Rule" id="MF_01568"/>
    </source>
</evidence>
<keyword id="KW-0378">Hydrolase</keyword>
<keyword id="KW-0460">Magnesium</keyword>
<keyword id="KW-0479">Metal-binding</keyword>